<organism>
    <name type="scientific">Serratia proteamaculans (strain 568)</name>
    <dbReference type="NCBI Taxonomy" id="399741"/>
    <lineage>
        <taxon>Bacteria</taxon>
        <taxon>Pseudomonadati</taxon>
        <taxon>Pseudomonadota</taxon>
        <taxon>Gammaproteobacteria</taxon>
        <taxon>Enterobacterales</taxon>
        <taxon>Yersiniaceae</taxon>
        <taxon>Serratia</taxon>
    </lineage>
</organism>
<proteinExistence type="inferred from homology"/>
<protein>
    <recommendedName>
        <fullName evidence="1">Protease HtpX</fullName>
        <ecNumber evidence="1">3.4.24.-</ecNumber>
    </recommendedName>
    <alternativeName>
        <fullName evidence="1">Heat shock protein HtpX</fullName>
    </alternativeName>
</protein>
<name>HTPX_SERP5</name>
<sequence length="292" mass="31851">MMRIALFLLTNLAVMLVFGLVLSLTGIQSSSVQGLMIMAGLFGFGGSFVSLLMSKWMALRSVGGEVIEQPRNETENWLLETVRRQSQQAGIAMPQVAIYHAPDINAFATGARRNASLVAVSTGLLQSMSRDEAEAVIAHEISHVANGDMVTMTLIQGIVNTFVIFISRLIAQAAAGFLGNRDGEGEGNGNPMIYFGVSMVLELVFGILASIITMWFSRHREFYADAGSAKLVGREKMIAALQRLKTSYEPQEAGNMMAFCINGKSKSFSELFMSHPPLDKRIEALRSGQYLK</sequence>
<reference key="1">
    <citation type="submission" date="2007-09" db="EMBL/GenBank/DDBJ databases">
        <title>Complete sequence of chromosome of Serratia proteamaculans 568.</title>
        <authorList>
            <consortium name="US DOE Joint Genome Institute"/>
            <person name="Copeland A."/>
            <person name="Lucas S."/>
            <person name="Lapidus A."/>
            <person name="Barry K."/>
            <person name="Glavina del Rio T."/>
            <person name="Dalin E."/>
            <person name="Tice H."/>
            <person name="Pitluck S."/>
            <person name="Chain P."/>
            <person name="Malfatti S."/>
            <person name="Shin M."/>
            <person name="Vergez L."/>
            <person name="Schmutz J."/>
            <person name="Larimer F."/>
            <person name="Land M."/>
            <person name="Hauser L."/>
            <person name="Kyrpides N."/>
            <person name="Kim E."/>
            <person name="Taghavi S."/>
            <person name="Newman L."/>
            <person name="Vangronsveld J."/>
            <person name="van der Lelie D."/>
            <person name="Richardson P."/>
        </authorList>
    </citation>
    <scope>NUCLEOTIDE SEQUENCE [LARGE SCALE GENOMIC DNA]</scope>
    <source>
        <strain>568</strain>
    </source>
</reference>
<dbReference type="EC" id="3.4.24.-" evidence="1"/>
<dbReference type="EMBL" id="CP000826">
    <property type="protein sequence ID" value="ABV41221.1"/>
    <property type="molecule type" value="Genomic_DNA"/>
</dbReference>
<dbReference type="SMR" id="A8GDN1"/>
<dbReference type="STRING" id="399741.Spro_2120"/>
<dbReference type="MEROPS" id="M48.002"/>
<dbReference type="KEGG" id="spe:Spro_2120"/>
<dbReference type="eggNOG" id="COG0501">
    <property type="taxonomic scope" value="Bacteria"/>
</dbReference>
<dbReference type="HOGENOM" id="CLU_042266_1_0_6"/>
<dbReference type="OrthoDB" id="15218at2"/>
<dbReference type="GO" id="GO:0005886">
    <property type="term" value="C:plasma membrane"/>
    <property type="evidence" value="ECO:0007669"/>
    <property type="project" value="UniProtKB-SubCell"/>
</dbReference>
<dbReference type="GO" id="GO:0004222">
    <property type="term" value="F:metalloendopeptidase activity"/>
    <property type="evidence" value="ECO:0007669"/>
    <property type="project" value="UniProtKB-UniRule"/>
</dbReference>
<dbReference type="GO" id="GO:0008270">
    <property type="term" value="F:zinc ion binding"/>
    <property type="evidence" value="ECO:0007669"/>
    <property type="project" value="UniProtKB-UniRule"/>
</dbReference>
<dbReference type="GO" id="GO:0006508">
    <property type="term" value="P:proteolysis"/>
    <property type="evidence" value="ECO:0007669"/>
    <property type="project" value="UniProtKB-KW"/>
</dbReference>
<dbReference type="CDD" id="cd07335">
    <property type="entry name" value="M48B_HtpX_like"/>
    <property type="match status" value="1"/>
</dbReference>
<dbReference type="FunFam" id="3.30.2010.10:FF:000001">
    <property type="entry name" value="Protease HtpX"/>
    <property type="match status" value="1"/>
</dbReference>
<dbReference type="Gene3D" id="3.30.2010.10">
    <property type="entry name" value="Metalloproteases ('zincins'), catalytic domain"/>
    <property type="match status" value="1"/>
</dbReference>
<dbReference type="HAMAP" id="MF_00188">
    <property type="entry name" value="Pept_M48_protease_HtpX"/>
    <property type="match status" value="1"/>
</dbReference>
<dbReference type="InterPro" id="IPR050083">
    <property type="entry name" value="HtpX_protease"/>
</dbReference>
<dbReference type="InterPro" id="IPR022919">
    <property type="entry name" value="Pept_M48_protease_HtpX"/>
</dbReference>
<dbReference type="InterPro" id="IPR001915">
    <property type="entry name" value="Peptidase_M48"/>
</dbReference>
<dbReference type="NCBIfam" id="NF003965">
    <property type="entry name" value="PRK05457.1"/>
    <property type="match status" value="1"/>
</dbReference>
<dbReference type="PANTHER" id="PTHR43221">
    <property type="entry name" value="PROTEASE HTPX"/>
    <property type="match status" value="1"/>
</dbReference>
<dbReference type="PANTHER" id="PTHR43221:SF1">
    <property type="entry name" value="PROTEASE HTPX"/>
    <property type="match status" value="1"/>
</dbReference>
<dbReference type="Pfam" id="PF01435">
    <property type="entry name" value="Peptidase_M48"/>
    <property type="match status" value="1"/>
</dbReference>
<feature type="chain" id="PRO_1000058469" description="Protease HtpX">
    <location>
        <begin position="1"/>
        <end position="292"/>
    </location>
</feature>
<feature type="transmembrane region" description="Helical" evidence="1">
    <location>
        <begin position="4"/>
        <end position="24"/>
    </location>
</feature>
<feature type="transmembrane region" description="Helical" evidence="1">
    <location>
        <begin position="34"/>
        <end position="54"/>
    </location>
</feature>
<feature type="transmembrane region" description="Helical" evidence="1">
    <location>
        <begin position="158"/>
        <end position="178"/>
    </location>
</feature>
<feature type="transmembrane region" description="Helical" evidence="1">
    <location>
        <begin position="192"/>
        <end position="212"/>
    </location>
</feature>
<feature type="active site" evidence="1">
    <location>
        <position position="140"/>
    </location>
</feature>
<feature type="binding site" evidence="1">
    <location>
        <position position="139"/>
    </location>
    <ligand>
        <name>Zn(2+)</name>
        <dbReference type="ChEBI" id="CHEBI:29105"/>
        <note>catalytic</note>
    </ligand>
</feature>
<feature type="binding site" evidence="1">
    <location>
        <position position="143"/>
    </location>
    <ligand>
        <name>Zn(2+)</name>
        <dbReference type="ChEBI" id="CHEBI:29105"/>
        <note>catalytic</note>
    </ligand>
</feature>
<feature type="binding site" evidence="1">
    <location>
        <position position="221"/>
    </location>
    <ligand>
        <name>Zn(2+)</name>
        <dbReference type="ChEBI" id="CHEBI:29105"/>
        <note>catalytic</note>
    </ligand>
</feature>
<evidence type="ECO:0000255" key="1">
    <source>
        <dbReference type="HAMAP-Rule" id="MF_00188"/>
    </source>
</evidence>
<comment type="cofactor">
    <cofactor evidence="1">
        <name>Zn(2+)</name>
        <dbReference type="ChEBI" id="CHEBI:29105"/>
    </cofactor>
    <text evidence="1">Binds 1 zinc ion per subunit.</text>
</comment>
<comment type="subcellular location">
    <subcellularLocation>
        <location evidence="1">Cell inner membrane</location>
        <topology evidence="1">Multi-pass membrane protein</topology>
    </subcellularLocation>
</comment>
<comment type="similarity">
    <text evidence="1">Belongs to the peptidase M48B family.</text>
</comment>
<accession>A8GDN1</accession>
<keyword id="KW-0997">Cell inner membrane</keyword>
<keyword id="KW-1003">Cell membrane</keyword>
<keyword id="KW-0378">Hydrolase</keyword>
<keyword id="KW-0472">Membrane</keyword>
<keyword id="KW-0479">Metal-binding</keyword>
<keyword id="KW-0482">Metalloprotease</keyword>
<keyword id="KW-0645">Protease</keyword>
<keyword id="KW-0812">Transmembrane</keyword>
<keyword id="KW-1133">Transmembrane helix</keyword>
<keyword id="KW-0862">Zinc</keyword>
<gene>
    <name evidence="1" type="primary">htpX</name>
    <name type="ordered locus">Spro_2120</name>
</gene>